<feature type="chain" id="PRO_1000063754" description="3-isopropylmalate dehydratase small subunit">
    <location>
        <begin position="1"/>
        <end position="201"/>
    </location>
</feature>
<protein>
    <recommendedName>
        <fullName evidence="1">3-isopropylmalate dehydratase small subunit</fullName>
        <ecNumber evidence="1">4.2.1.33</ecNumber>
    </recommendedName>
    <alternativeName>
        <fullName evidence="1">Alpha-IPM isomerase</fullName>
        <shortName evidence="1">IPMI</shortName>
    </alternativeName>
    <alternativeName>
        <fullName evidence="1">Isopropylmalate isomerase</fullName>
    </alternativeName>
</protein>
<comment type="function">
    <text evidence="1">Catalyzes the isomerization between 2-isopropylmalate and 3-isopropylmalate, via the formation of 2-isopropylmaleate.</text>
</comment>
<comment type="catalytic activity">
    <reaction evidence="1">
        <text>(2R,3S)-3-isopropylmalate = (2S)-2-isopropylmalate</text>
        <dbReference type="Rhea" id="RHEA:32287"/>
        <dbReference type="ChEBI" id="CHEBI:1178"/>
        <dbReference type="ChEBI" id="CHEBI:35121"/>
        <dbReference type="EC" id="4.2.1.33"/>
    </reaction>
</comment>
<comment type="pathway">
    <text evidence="1">Amino-acid biosynthesis; L-leucine biosynthesis; L-leucine from 3-methyl-2-oxobutanoate: step 2/4.</text>
</comment>
<comment type="subunit">
    <text evidence="1">Heterodimer of LeuC and LeuD.</text>
</comment>
<comment type="similarity">
    <text evidence="1">Belongs to the LeuD family. LeuD type 1 subfamily.</text>
</comment>
<accession>Q11NN7</accession>
<dbReference type="EC" id="4.2.1.33" evidence="1"/>
<dbReference type="EMBL" id="CP000383">
    <property type="protein sequence ID" value="ABG60976.1"/>
    <property type="molecule type" value="Genomic_DNA"/>
</dbReference>
<dbReference type="RefSeq" id="WP_011587081.1">
    <property type="nucleotide sequence ID" value="NC_008255.1"/>
</dbReference>
<dbReference type="SMR" id="Q11NN7"/>
<dbReference type="STRING" id="269798.CHU_3743"/>
<dbReference type="KEGG" id="chu:CHU_3743"/>
<dbReference type="eggNOG" id="COG0066">
    <property type="taxonomic scope" value="Bacteria"/>
</dbReference>
<dbReference type="HOGENOM" id="CLU_081378_0_3_10"/>
<dbReference type="OrthoDB" id="9777465at2"/>
<dbReference type="UniPathway" id="UPA00048">
    <property type="reaction ID" value="UER00071"/>
</dbReference>
<dbReference type="Proteomes" id="UP000001822">
    <property type="component" value="Chromosome"/>
</dbReference>
<dbReference type="GO" id="GO:0009316">
    <property type="term" value="C:3-isopropylmalate dehydratase complex"/>
    <property type="evidence" value="ECO:0007669"/>
    <property type="project" value="InterPro"/>
</dbReference>
<dbReference type="GO" id="GO:0003861">
    <property type="term" value="F:3-isopropylmalate dehydratase activity"/>
    <property type="evidence" value="ECO:0007669"/>
    <property type="project" value="UniProtKB-UniRule"/>
</dbReference>
<dbReference type="GO" id="GO:0009098">
    <property type="term" value="P:L-leucine biosynthetic process"/>
    <property type="evidence" value="ECO:0007669"/>
    <property type="project" value="UniProtKB-UniRule"/>
</dbReference>
<dbReference type="CDD" id="cd01577">
    <property type="entry name" value="IPMI_Swivel"/>
    <property type="match status" value="1"/>
</dbReference>
<dbReference type="FunFam" id="3.20.19.10:FF:000003">
    <property type="entry name" value="3-isopropylmalate dehydratase small subunit"/>
    <property type="match status" value="1"/>
</dbReference>
<dbReference type="Gene3D" id="3.20.19.10">
    <property type="entry name" value="Aconitase, domain 4"/>
    <property type="match status" value="1"/>
</dbReference>
<dbReference type="HAMAP" id="MF_01031">
    <property type="entry name" value="LeuD_type1"/>
    <property type="match status" value="1"/>
</dbReference>
<dbReference type="InterPro" id="IPR004431">
    <property type="entry name" value="3-IsopropMal_deHydase_ssu"/>
</dbReference>
<dbReference type="InterPro" id="IPR015928">
    <property type="entry name" value="Aconitase/3IPM_dehydase_swvl"/>
</dbReference>
<dbReference type="InterPro" id="IPR000573">
    <property type="entry name" value="AconitaseA/IPMdHydase_ssu_swvl"/>
</dbReference>
<dbReference type="InterPro" id="IPR033940">
    <property type="entry name" value="IPMI_Swivel"/>
</dbReference>
<dbReference type="InterPro" id="IPR050075">
    <property type="entry name" value="LeuD"/>
</dbReference>
<dbReference type="NCBIfam" id="TIGR00171">
    <property type="entry name" value="leuD"/>
    <property type="match status" value="1"/>
</dbReference>
<dbReference type="NCBIfam" id="NF002458">
    <property type="entry name" value="PRK01641.1"/>
    <property type="match status" value="1"/>
</dbReference>
<dbReference type="PANTHER" id="PTHR43345:SF5">
    <property type="entry name" value="3-ISOPROPYLMALATE DEHYDRATASE SMALL SUBUNIT"/>
    <property type="match status" value="1"/>
</dbReference>
<dbReference type="PANTHER" id="PTHR43345">
    <property type="entry name" value="3-ISOPROPYLMALATE DEHYDRATASE SMALL SUBUNIT 2-RELATED-RELATED"/>
    <property type="match status" value="1"/>
</dbReference>
<dbReference type="Pfam" id="PF00694">
    <property type="entry name" value="Aconitase_C"/>
    <property type="match status" value="1"/>
</dbReference>
<dbReference type="SUPFAM" id="SSF52016">
    <property type="entry name" value="LeuD/IlvD-like"/>
    <property type="match status" value="1"/>
</dbReference>
<gene>
    <name evidence="1" type="primary">leuD</name>
    <name type="ordered locus">CHU_3743</name>
</gene>
<sequence length="201" mass="22138">MEKFITIKSTVVPLPIEDVDTDQIIPARFLKATTKEGFGKSLFCDWRYNQDGTPKADFVMNNPLYSGQILVAGKNFGCGSSREHAAWAIGDAGFRVVVSSFFADIFRGNALNNGILPVQVSDAFLKSIFDAVAANAKQELVVDLANQVISIAGTDLKESFVINEYKKTCLINGYDDIDYVLSIKDKIEAYEKTSKYLSLLA</sequence>
<organism>
    <name type="scientific">Cytophaga hutchinsonii (strain ATCC 33406 / DSM 1761 / CIP 103989 / NBRC 15051 / NCIMB 9469 / D465)</name>
    <dbReference type="NCBI Taxonomy" id="269798"/>
    <lineage>
        <taxon>Bacteria</taxon>
        <taxon>Pseudomonadati</taxon>
        <taxon>Bacteroidota</taxon>
        <taxon>Cytophagia</taxon>
        <taxon>Cytophagales</taxon>
        <taxon>Cytophagaceae</taxon>
        <taxon>Cytophaga</taxon>
    </lineage>
</organism>
<keyword id="KW-0028">Amino-acid biosynthesis</keyword>
<keyword id="KW-0100">Branched-chain amino acid biosynthesis</keyword>
<keyword id="KW-0432">Leucine biosynthesis</keyword>
<keyword id="KW-0456">Lyase</keyword>
<keyword id="KW-1185">Reference proteome</keyword>
<reference key="1">
    <citation type="journal article" date="2007" name="Appl. Environ. Microbiol.">
        <title>Genome sequence of the cellulolytic gliding bacterium Cytophaga hutchinsonii.</title>
        <authorList>
            <person name="Xie G."/>
            <person name="Bruce D.C."/>
            <person name="Challacombe J.F."/>
            <person name="Chertkov O."/>
            <person name="Detter J.C."/>
            <person name="Gilna P."/>
            <person name="Han C.S."/>
            <person name="Lucas S."/>
            <person name="Misra M."/>
            <person name="Myers G.L."/>
            <person name="Richardson P."/>
            <person name="Tapia R."/>
            <person name="Thayer N."/>
            <person name="Thompson L.S."/>
            <person name="Brettin T.S."/>
            <person name="Henrissat B."/>
            <person name="Wilson D.B."/>
            <person name="McBride M.J."/>
        </authorList>
    </citation>
    <scope>NUCLEOTIDE SEQUENCE [LARGE SCALE GENOMIC DNA]</scope>
    <source>
        <strain>ATCC 33406 / DSM 1761 / JCM 20678 / CIP 103989 / IAM 12607 / NBRC 15051 / NCIMB 9469 / D465</strain>
    </source>
</reference>
<proteinExistence type="inferred from homology"/>
<name>LEUD_CYTH3</name>
<evidence type="ECO:0000255" key="1">
    <source>
        <dbReference type="HAMAP-Rule" id="MF_01031"/>
    </source>
</evidence>